<comment type="function">
    <text evidence="2 5 6">Mitochondrial enzyme that catalyzes the dephosphorylation and concomitant reactivation of the alpha subunit of the E1 component of the pyruvate dehydrogenase complex (PDC), thereby stimulating the conversion of pyruvate into acetyl-CoA (PubMed:14644048, PubMed:9651365). Acts as a crucial regulator of T cell metabolism and function, with a particular focus on T-helper Th17 (By similarity).</text>
</comment>
<comment type="catalytic activity">
    <reaction evidence="5 6">
        <text>O-phospho-L-seryl-[pyruvate dehydrogenase E1 alpha subunit] + H2O = L-seryl-[pyruvate dehydrogenase E1 alpha subunit] + phosphate</text>
        <dbReference type="Rhea" id="RHEA:12669"/>
        <dbReference type="Rhea" id="RHEA-COMP:13689"/>
        <dbReference type="Rhea" id="RHEA-COMP:13690"/>
        <dbReference type="ChEBI" id="CHEBI:15377"/>
        <dbReference type="ChEBI" id="CHEBI:29999"/>
        <dbReference type="ChEBI" id="CHEBI:43474"/>
        <dbReference type="ChEBI" id="CHEBI:83421"/>
        <dbReference type="EC" id="3.1.3.43"/>
    </reaction>
    <physiologicalReaction direction="left-to-right" evidence="8">
        <dbReference type="Rhea" id="RHEA:12670"/>
    </physiologicalReaction>
</comment>
<comment type="cofactor">
    <cofactor evidence="6">
        <name>Mg(2+)</name>
        <dbReference type="ChEBI" id="CHEBI:18420"/>
    </cofactor>
    <text evidence="1">Binds 2 magnesium ions per subunit.</text>
</comment>
<comment type="activity regulation">
    <text evidence="6">Mg(2+)-dependent protein phosphatase. Phosphatase activity is increased in the presence of spermine, a naturally produced polyamine.</text>
</comment>
<comment type="biophysicochemical properties">
    <kinetics>
        <KM evidence="6">17.4 mM for Mg(2+)</KM>
    </kinetics>
</comment>
<comment type="subcellular location">
    <subcellularLocation>
        <location evidence="6">Mitochondrion</location>
    </subcellularLocation>
</comment>
<comment type="tissue specificity">
    <text evidence="6">Highly expressed in liver.</text>
</comment>
<comment type="similarity">
    <text evidence="7">Belongs to the PP2C family.</text>
</comment>
<evidence type="ECO:0000250" key="1">
    <source>
        <dbReference type="UniProtKB" id="P35816"/>
    </source>
</evidence>
<evidence type="ECO:0000250" key="2">
    <source>
        <dbReference type="UniProtKB" id="Q504M2"/>
    </source>
</evidence>
<evidence type="ECO:0000255" key="3"/>
<evidence type="ECO:0000255" key="4">
    <source>
        <dbReference type="PROSITE-ProRule" id="PRU01082"/>
    </source>
</evidence>
<evidence type="ECO:0000269" key="5">
    <source>
    </source>
</evidence>
<evidence type="ECO:0000269" key="6">
    <source>
    </source>
</evidence>
<evidence type="ECO:0000305" key="7"/>
<evidence type="ECO:0000305" key="8">
    <source>
    </source>
</evidence>
<reference key="1">
    <citation type="journal article" date="1998" name="J. Biol. Chem.">
        <title>Isoenzymes of pyruvate dehydrogenase phosphatase. DNA-derived amino acid sequences, expression, and regulation.</title>
        <authorList>
            <person name="Huang B."/>
            <person name="Gudi R."/>
            <person name="Wu P."/>
            <person name="Harris R.A."/>
            <person name="Hamilton J."/>
            <person name="Popov K.M."/>
        </authorList>
    </citation>
    <scope>NUCLEOTIDE SEQUENCE [MRNA]</scope>
    <scope>FUNCTION</scope>
    <scope>CATALYTIC ACTIVITY</scope>
    <scope>SUBCELLULAR LOCATION</scope>
    <scope>TISSUE SPECIFICITY</scope>
    <scope>BIOPHYSICOCHEMICAL PROPERTIES</scope>
    <scope>COFACTOR</scope>
    <scope>ACTIVITY REGULATION</scope>
    <source>
        <tissue>Liver</tissue>
    </source>
</reference>
<reference key="2">
    <citation type="journal article" date="2004" name="Genome Res.">
        <title>The status, quality, and expansion of the NIH full-length cDNA project: the Mammalian Gene Collection (MGC).</title>
        <authorList>
            <consortium name="The MGC Project Team"/>
        </authorList>
    </citation>
    <scope>NUCLEOTIDE SEQUENCE [LARGE SCALE MRNA]</scope>
    <source>
        <tissue>Heart</tissue>
    </source>
</reference>
<reference key="3">
    <citation type="journal article" date="2004" name="Nature">
        <title>Genome sequence of the Brown Norway rat yields insights into mammalian evolution.</title>
        <authorList>
            <person name="Gibbs R.A."/>
            <person name="Weinstock G.M."/>
            <person name="Metzker M.L."/>
            <person name="Muzny D.M."/>
            <person name="Sodergren E.J."/>
            <person name="Scherer S."/>
            <person name="Scott G."/>
            <person name="Steffen D."/>
            <person name="Worley K.C."/>
            <person name="Burch P.E."/>
            <person name="Okwuonu G."/>
            <person name="Hines S."/>
            <person name="Lewis L."/>
            <person name="Deramo C."/>
            <person name="Delgado O."/>
            <person name="Dugan-Rocha S."/>
            <person name="Miner G."/>
            <person name="Morgan M."/>
            <person name="Hawes A."/>
            <person name="Gill R."/>
            <person name="Holt R.A."/>
            <person name="Adams M.D."/>
            <person name="Amanatides P.G."/>
            <person name="Baden-Tillson H."/>
            <person name="Barnstead M."/>
            <person name="Chin S."/>
            <person name="Evans C.A."/>
            <person name="Ferriera S."/>
            <person name="Fosler C."/>
            <person name="Glodek A."/>
            <person name="Gu Z."/>
            <person name="Jennings D."/>
            <person name="Kraft C.L."/>
            <person name="Nguyen T."/>
            <person name="Pfannkoch C.M."/>
            <person name="Sitter C."/>
            <person name="Sutton G.G."/>
            <person name="Venter J.C."/>
            <person name="Woodage T."/>
            <person name="Smith D."/>
            <person name="Lee H.-M."/>
            <person name="Gustafson E."/>
            <person name="Cahill P."/>
            <person name="Kana A."/>
            <person name="Doucette-Stamm L."/>
            <person name="Weinstock K."/>
            <person name="Fechtel K."/>
            <person name="Weiss R.B."/>
            <person name="Dunn D.M."/>
            <person name="Green E.D."/>
            <person name="Blakesley R.W."/>
            <person name="Bouffard G.G."/>
            <person name="De Jong P.J."/>
            <person name="Osoegawa K."/>
            <person name="Zhu B."/>
            <person name="Marra M."/>
            <person name="Schein J."/>
            <person name="Bosdet I."/>
            <person name="Fjell C."/>
            <person name="Jones S."/>
            <person name="Krzywinski M."/>
            <person name="Mathewson C."/>
            <person name="Siddiqui A."/>
            <person name="Wye N."/>
            <person name="McPherson J."/>
            <person name="Zhao S."/>
            <person name="Fraser C.M."/>
            <person name="Shetty J."/>
            <person name="Shatsman S."/>
            <person name="Geer K."/>
            <person name="Chen Y."/>
            <person name="Abramzon S."/>
            <person name="Nierman W.C."/>
            <person name="Havlak P.H."/>
            <person name="Chen R."/>
            <person name="Durbin K.J."/>
            <person name="Egan A."/>
            <person name="Ren Y."/>
            <person name="Song X.-Z."/>
            <person name="Li B."/>
            <person name="Liu Y."/>
            <person name="Qin X."/>
            <person name="Cawley S."/>
            <person name="Cooney A.J."/>
            <person name="D'Souza L.M."/>
            <person name="Martin K."/>
            <person name="Wu J.Q."/>
            <person name="Gonzalez-Garay M.L."/>
            <person name="Jackson A.R."/>
            <person name="Kalafus K.J."/>
            <person name="McLeod M.P."/>
            <person name="Milosavljevic A."/>
            <person name="Virk D."/>
            <person name="Volkov A."/>
            <person name="Wheeler D.A."/>
            <person name="Zhang Z."/>
            <person name="Bailey J.A."/>
            <person name="Eichler E.E."/>
            <person name="Tuzun E."/>
            <person name="Birney E."/>
            <person name="Mongin E."/>
            <person name="Ureta-Vidal A."/>
            <person name="Woodwark C."/>
            <person name="Zdobnov E."/>
            <person name="Bork P."/>
            <person name="Suyama M."/>
            <person name="Torrents D."/>
            <person name="Alexandersson M."/>
            <person name="Trask B.J."/>
            <person name="Young J.M."/>
            <person name="Huang H."/>
            <person name="Wang H."/>
            <person name="Xing H."/>
            <person name="Daniels S."/>
            <person name="Gietzen D."/>
            <person name="Schmidt J."/>
            <person name="Stevens K."/>
            <person name="Vitt U."/>
            <person name="Wingrove J."/>
            <person name="Camara F."/>
            <person name="Mar Alba M."/>
            <person name="Abril J.F."/>
            <person name="Guigo R."/>
            <person name="Smit A."/>
            <person name="Dubchak I."/>
            <person name="Rubin E.M."/>
            <person name="Couronne O."/>
            <person name="Poliakov A."/>
            <person name="Huebner N."/>
            <person name="Ganten D."/>
            <person name="Goesele C."/>
            <person name="Hummel O."/>
            <person name="Kreitler T."/>
            <person name="Lee Y.-A."/>
            <person name="Monti J."/>
            <person name="Schulz H."/>
            <person name="Zimdahl H."/>
            <person name="Himmelbauer H."/>
            <person name="Lehrach H."/>
            <person name="Jacob H.J."/>
            <person name="Bromberg S."/>
            <person name="Gullings-Handley J."/>
            <person name="Jensen-Seaman M.I."/>
            <person name="Kwitek A.E."/>
            <person name="Lazar J."/>
            <person name="Pasko D."/>
            <person name="Tonellato P.J."/>
            <person name="Twigger S."/>
            <person name="Ponting C.P."/>
            <person name="Duarte J.M."/>
            <person name="Rice S."/>
            <person name="Goodstadt L."/>
            <person name="Beatson S.A."/>
            <person name="Emes R.D."/>
            <person name="Winter E.E."/>
            <person name="Webber C."/>
            <person name="Brandt P."/>
            <person name="Nyakatura G."/>
            <person name="Adetobi M."/>
            <person name="Chiaromonte F."/>
            <person name="Elnitski L."/>
            <person name="Eswara P."/>
            <person name="Hardison R.C."/>
            <person name="Hou M."/>
            <person name="Kolbe D."/>
            <person name="Makova K."/>
            <person name="Miller W."/>
            <person name="Nekrutenko A."/>
            <person name="Riemer C."/>
            <person name="Schwartz S."/>
            <person name="Taylor J."/>
            <person name="Yang S."/>
            <person name="Zhang Y."/>
            <person name="Lindpaintner K."/>
            <person name="Andrews T.D."/>
            <person name="Caccamo M."/>
            <person name="Clamp M."/>
            <person name="Clarke L."/>
            <person name="Curwen V."/>
            <person name="Durbin R.M."/>
            <person name="Eyras E."/>
            <person name="Searle S.M."/>
            <person name="Cooper G.M."/>
            <person name="Batzoglou S."/>
            <person name="Brudno M."/>
            <person name="Sidow A."/>
            <person name="Stone E.A."/>
            <person name="Payseur B.A."/>
            <person name="Bourque G."/>
            <person name="Lopez-Otin C."/>
            <person name="Puente X.S."/>
            <person name="Chakrabarti K."/>
            <person name="Chatterji S."/>
            <person name="Dewey C."/>
            <person name="Pachter L."/>
            <person name="Bray N."/>
            <person name="Yap V.B."/>
            <person name="Caspi A."/>
            <person name="Tesler G."/>
            <person name="Pevzner P.A."/>
            <person name="Haussler D."/>
            <person name="Roskin K.M."/>
            <person name="Baertsch R."/>
            <person name="Clawson H."/>
            <person name="Furey T.S."/>
            <person name="Hinrichs A.S."/>
            <person name="Karolchik D."/>
            <person name="Kent W.J."/>
            <person name="Rosenbloom K.R."/>
            <person name="Trumbower H."/>
            <person name="Weirauch M."/>
            <person name="Cooper D.N."/>
            <person name="Stenson P.D."/>
            <person name="Ma B."/>
            <person name="Brent M."/>
            <person name="Arumugam M."/>
            <person name="Shteynberg D."/>
            <person name="Copley R.R."/>
            <person name="Taylor M.S."/>
            <person name="Riethman H."/>
            <person name="Mudunuri U."/>
            <person name="Peterson J."/>
            <person name="Guyer M."/>
            <person name="Felsenfeld A."/>
            <person name="Old S."/>
            <person name="Mockrin S."/>
            <person name="Collins F.S."/>
        </authorList>
    </citation>
    <scope>NUCLEOTIDE SEQUENCE [LARGE SCALE GENOMIC DNA]</scope>
    <source>
        <strain>Brown Norway</strain>
    </source>
</reference>
<reference key="4">
    <citation type="journal article" date="2003" name="Biochim. Biophys. Acta">
        <title>Characterization of the isozymes of pyruvate dehydrogenase phosphatase: implications for the regulation of pyruvate dehydrogenase activity.</title>
        <authorList>
            <person name="Karpova T."/>
            <person name="Danchuk S."/>
            <person name="Kolobova E."/>
            <person name="Popov K.M."/>
        </authorList>
    </citation>
    <scope>FUNCTION</scope>
    <scope>CATALYTIC ACTIVITY</scope>
</reference>
<keyword id="KW-0378">Hydrolase</keyword>
<keyword id="KW-0460">Magnesium</keyword>
<keyword id="KW-0464">Manganese</keyword>
<keyword id="KW-0479">Metal-binding</keyword>
<keyword id="KW-0496">Mitochondrion</keyword>
<keyword id="KW-0904">Protein phosphatase</keyword>
<keyword id="KW-1185">Reference proteome</keyword>
<keyword id="KW-0809">Transit peptide</keyword>
<accession>O88484</accession>
<accession>A0A0G2JSL7</accession>
<accession>Q6IN27</accession>
<gene>
    <name type="primary">Pdp2</name>
</gene>
<proteinExistence type="evidence at protein level"/>
<name>PDP2_RAT</name>
<feature type="transit peptide" description="Mitochondrion" evidence="3">
    <location>
        <begin position="1"/>
        <end position="67"/>
    </location>
</feature>
<feature type="chain" id="PRO_0000025422" description="[Pyruvate dehydrogenase [acetyl-transferring]]-phosphatase 2, mitochondrial">
    <location>
        <begin position="68"/>
        <end position="530"/>
    </location>
</feature>
<feature type="domain" description="PPM-type phosphatase" evidence="4">
    <location>
        <begin position="107"/>
        <end position="518"/>
    </location>
</feature>
<feature type="binding site" evidence="1">
    <location>
        <position position="142"/>
    </location>
    <ligand>
        <name>Mn(2+)</name>
        <dbReference type="ChEBI" id="CHEBI:29035"/>
        <label>1</label>
    </ligand>
</feature>
<feature type="binding site" evidence="1">
    <location>
        <position position="142"/>
    </location>
    <ligand>
        <name>Mn(2+)</name>
        <dbReference type="ChEBI" id="CHEBI:29035"/>
        <label>2</label>
    </ligand>
</feature>
<feature type="binding site" evidence="1">
    <location>
        <position position="143"/>
    </location>
    <ligand>
        <name>Mn(2+)</name>
        <dbReference type="ChEBI" id="CHEBI:29035"/>
        <label>1</label>
    </ligand>
</feature>
<feature type="binding site" evidence="1">
    <location>
        <position position="413"/>
    </location>
    <ligand>
        <name>Mn(2+)</name>
        <dbReference type="ChEBI" id="CHEBI:29035"/>
        <label>2</label>
    </ligand>
</feature>
<feature type="binding site" evidence="1">
    <location>
        <position position="509"/>
    </location>
    <ligand>
        <name>Mn(2+)</name>
        <dbReference type="ChEBI" id="CHEBI:29035"/>
        <label>2</label>
    </ligand>
</feature>
<feature type="sequence conflict" description="In Ref. 1; AAC40168." evidence="7" ref="1">
    <original>M</original>
    <variation>V</variation>
    <location>
        <position position="137"/>
    </location>
</feature>
<protein>
    <recommendedName>
        <fullName>[Pyruvate dehydrogenase [acetyl-transferring]]-phosphatase 2, mitochondrial</fullName>
        <shortName>PDP 2</shortName>
        <ecNumber evidence="5 6">3.1.3.43</ecNumber>
    </recommendedName>
    <alternativeName>
        <fullName>Pyruvate dehydrogenase phosphatase catalytic subunit 2</fullName>
        <shortName>PDPC 2</shortName>
    </alternativeName>
</protein>
<organism>
    <name type="scientific">Rattus norvegicus</name>
    <name type="common">Rat</name>
    <dbReference type="NCBI Taxonomy" id="10116"/>
    <lineage>
        <taxon>Eukaryota</taxon>
        <taxon>Metazoa</taxon>
        <taxon>Chordata</taxon>
        <taxon>Craniata</taxon>
        <taxon>Vertebrata</taxon>
        <taxon>Euteleostomi</taxon>
        <taxon>Mammalia</taxon>
        <taxon>Eutheria</taxon>
        <taxon>Euarchontoglires</taxon>
        <taxon>Glires</taxon>
        <taxon>Rodentia</taxon>
        <taxon>Myomorpha</taxon>
        <taxon>Muroidea</taxon>
        <taxon>Muridae</taxon>
        <taxon>Murinae</taxon>
        <taxon>Rattus</taxon>
    </lineage>
</organism>
<sequence length="530" mass="59687">MSSTASYRIFNFARNRIAVLRGGRRLYSRAATSRNQVKWRLFSPASLAVNDSSPHGGFALRKAYRHTSTEEEDFHLQLSPEQVSDLLRAGESSHKVLDFNSGVPNSVLRFESNQLAANSPVEDRQGVASCVQTRGTMFGIFDGHGGHACAQAVSERLFYYMAVSLMSHKTLEQMEEAMENMKPLLPILQWLKHPGDSIYKDITSVHLDHLRVYWQELLDLHMETGLSTEEALMYSFQRLDSDISLEIQAPLEDEVTKNLSLQVAFSGATACMAHVDGVHLHIANAGDCRAILGVQGDNGAWSCLPLTCDHNAWNEAELSRLKREHPESEDRTLIIDDRLLGVLLPCRAFGDVQLKWSKELQRNVLERGFDTEALNIYQFTPPHYHTPPYLTAKPEVTYHRLRPQDKFLVLASDGLWDMLDNEDVVRLVVGHLSKVGHQKPALDQRPANLGHMQSLLLQRKASGLHAADQNAATHLIRHAIGSNEYGEMEPERLAAMLTLPEDVARMYRDDITVMVVFFNSESIDTYFKEG</sequence>
<dbReference type="EC" id="3.1.3.43" evidence="5 6"/>
<dbReference type="EMBL" id="AF062741">
    <property type="protein sequence ID" value="AAC40168.1"/>
    <property type="molecule type" value="mRNA"/>
</dbReference>
<dbReference type="EMBL" id="BC072485">
    <property type="protein sequence ID" value="AAH72485.1"/>
    <property type="molecule type" value="mRNA"/>
</dbReference>
<dbReference type="EMBL" id="AABR07042639">
    <property type="status" value="NOT_ANNOTATED_CDS"/>
    <property type="molecule type" value="Genomic_DNA"/>
</dbReference>
<dbReference type="RefSeq" id="NP_659559.2">
    <property type="nucleotide sequence ID" value="NM_145091.4"/>
</dbReference>
<dbReference type="RefSeq" id="XP_006255110.1">
    <property type="nucleotide sequence ID" value="XM_006255048.5"/>
</dbReference>
<dbReference type="SMR" id="O88484"/>
<dbReference type="FunCoup" id="O88484">
    <property type="interactions" value="1929"/>
</dbReference>
<dbReference type="STRING" id="10116.ENSRNOP00000016462"/>
<dbReference type="PhosphoSitePlus" id="O88484"/>
<dbReference type="PaxDb" id="10116-ENSRNOP00000016462"/>
<dbReference type="Ensembl" id="ENSRNOT00000016462.6">
    <property type="protein sequence ID" value="ENSRNOP00000016462.2"/>
    <property type="gene ID" value="ENSRNOG00000012343.6"/>
</dbReference>
<dbReference type="GeneID" id="246311"/>
<dbReference type="KEGG" id="rno:246311"/>
<dbReference type="UCSC" id="RGD:628812">
    <property type="organism name" value="rat"/>
</dbReference>
<dbReference type="AGR" id="RGD:628812"/>
<dbReference type="CTD" id="57546"/>
<dbReference type="RGD" id="628812">
    <property type="gene designation" value="Pdp2"/>
</dbReference>
<dbReference type="eggNOG" id="KOG0700">
    <property type="taxonomic scope" value="Eukaryota"/>
</dbReference>
<dbReference type="GeneTree" id="ENSGT00940000160687"/>
<dbReference type="InParanoid" id="O88484"/>
<dbReference type="OMA" id="DHNAWNP"/>
<dbReference type="OrthoDB" id="420076at2759"/>
<dbReference type="PhylomeDB" id="O88484"/>
<dbReference type="TreeFam" id="TF313505"/>
<dbReference type="BRENDA" id="3.1.3.43">
    <property type="organism ID" value="5301"/>
</dbReference>
<dbReference type="Reactome" id="R-RNO-204174">
    <property type="pathway name" value="Regulation of pyruvate dehydrogenase (PDH) complex"/>
</dbReference>
<dbReference type="PRO" id="PR:O88484"/>
<dbReference type="Proteomes" id="UP000002494">
    <property type="component" value="Chromosome 19"/>
</dbReference>
<dbReference type="Bgee" id="ENSRNOG00000012343">
    <property type="expression patterns" value="Expressed in adult mammalian kidney and 17 other cell types or tissues"/>
</dbReference>
<dbReference type="GO" id="GO:0005739">
    <property type="term" value="C:mitochondrion"/>
    <property type="evidence" value="ECO:0000314"/>
    <property type="project" value="UniProtKB"/>
</dbReference>
<dbReference type="GO" id="GO:0004741">
    <property type="term" value="F:[pyruvate dehydrogenase (acetyl-transferring)]-phosphatase activity"/>
    <property type="evidence" value="ECO:0000314"/>
    <property type="project" value="UniProtKB"/>
</dbReference>
<dbReference type="GO" id="GO:0046872">
    <property type="term" value="F:metal ion binding"/>
    <property type="evidence" value="ECO:0007669"/>
    <property type="project" value="UniProtKB-KW"/>
</dbReference>
<dbReference type="GO" id="GO:0004722">
    <property type="term" value="F:protein serine/threonine phosphatase activity"/>
    <property type="evidence" value="ECO:0000314"/>
    <property type="project" value="UniProtKB"/>
</dbReference>
<dbReference type="GO" id="GO:0035970">
    <property type="term" value="P:peptidyl-threonine dephosphorylation"/>
    <property type="evidence" value="ECO:0000314"/>
    <property type="project" value="UniProtKB"/>
</dbReference>
<dbReference type="GO" id="GO:0042594">
    <property type="term" value="P:response to starvation"/>
    <property type="evidence" value="ECO:0000270"/>
    <property type="project" value="RGD"/>
</dbReference>
<dbReference type="GO" id="GO:0007165">
    <property type="term" value="P:signal transduction"/>
    <property type="evidence" value="ECO:0000318"/>
    <property type="project" value="GO_Central"/>
</dbReference>
<dbReference type="GO" id="GO:0042093">
    <property type="term" value="P:T-helper cell differentiation"/>
    <property type="evidence" value="ECO:0000250"/>
    <property type="project" value="UniProtKB"/>
</dbReference>
<dbReference type="CDD" id="cd00143">
    <property type="entry name" value="PP2Cc"/>
    <property type="match status" value="1"/>
</dbReference>
<dbReference type="FunFam" id="3.60.40.10:FF:000006">
    <property type="entry name" value="Pyruvate dehyrogenase phosphatase catalytic subunit 1"/>
    <property type="match status" value="1"/>
</dbReference>
<dbReference type="Gene3D" id="3.60.40.10">
    <property type="entry name" value="PPM-type phosphatase domain"/>
    <property type="match status" value="1"/>
</dbReference>
<dbReference type="InterPro" id="IPR015655">
    <property type="entry name" value="PP2C"/>
</dbReference>
<dbReference type="InterPro" id="IPR000222">
    <property type="entry name" value="PP2C_BS"/>
</dbReference>
<dbReference type="InterPro" id="IPR036457">
    <property type="entry name" value="PPM-type-like_dom_sf"/>
</dbReference>
<dbReference type="InterPro" id="IPR001932">
    <property type="entry name" value="PPM-type_phosphatase-like_dom"/>
</dbReference>
<dbReference type="PANTHER" id="PTHR13832:SF343">
    <property type="entry name" value="[PYRUVATE DEHYDROGENASE [ACETYL-TRANSFERRING]]-PHOSPHATASE 2, MITOCHONDRIAL"/>
    <property type="match status" value="1"/>
</dbReference>
<dbReference type="PANTHER" id="PTHR13832">
    <property type="entry name" value="PROTEIN PHOSPHATASE 2C"/>
    <property type="match status" value="1"/>
</dbReference>
<dbReference type="Pfam" id="PF00481">
    <property type="entry name" value="PP2C"/>
    <property type="match status" value="1"/>
</dbReference>
<dbReference type="SMART" id="SM00332">
    <property type="entry name" value="PP2Cc"/>
    <property type="match status" value="1"/>
</dbReference>
<dbReference type="SUPFAM" id="SSF81606">
    <property type="entry name" value="PP2C-like"/>
    <property type="match status" value="1"/>
</dbReference>
<dbReference type="PROSITE" id="PS01032">
    <property type="entry name" value="PPM_1"/>
    <property type="match status" value="1"/>
</dbReference>
<dbReference type="PROSITE" id="PS51746">
    <property type="entry name" value="PPM_2"/>
    <property type="match status" value="1"/>
</dbReference>